<reference key="1">
    <citation type="journal article" date="2005" name="Science">
        <title>The transcriptional landscape of the mammalian genome.</title>
        <authorList>
            <person name="Carninci P."/>
            <person name="Kasukawa T."/>
            <person name="Katayama S."/>
            <person name="Gough J."/>
            <person name="Frith M.C."/>
            <person name="Maeda N."/>
            <person name="Oyama R."/>
            <person name="Ravasi T."/>
            <person name="Lenhard B."/>
            <person name="Wells C."/>
            <person name="Kodzius R."/>
            <person name="Shimokawa K."/>
            <person name="Bajic V.B."/>
            <person name="Brenner S.E."/>
            <person name="Batalov S."/>
            <person name="Forrest A.R."/>
            <person name="Zavolan M."/>
            <person name="Davis M.J."/>
            <person name="Wilming L.G."/>
            <person name="Aidinis V."/>
            <person name="Allen J.E."/>
            <person name="Ambesi-Impiombato A."/>
            <person name="Apweiler R."/>
            <person name="Aturaliya R.N."/>
            <person name="Bailey T.L."/>
            <person name="Bansal M."/>
            <person name="Baxter L."/>
            <person name="Beisel K.W."/>
            <person name="Bersano T."/>
            <person name="Bono H."/>
            <person name="Chalk A.M."/>
            <person name="Chiu K.P."/>
            <person name="Choudhary V."/>
            <person name="Christoffels A."/>
            <person name="Clutterbuck D.R."/>
            <person name="Crowe M.L."/>
            <person name="Dalla E."/>
            <person name="Dalrymple B.P."/>
            <person name="de Bono B."/>
            <person name="Della Gatta G."/>
            <person name="di Bernardo D."/>
            <person name="Down T."/>
            <person name="Engstrom P."/>
            <person name="Fagiolini M."/>
            <person name="Faulkner G."/>
            <person name="Fletcher C.F."/>
            <person name="Fukushima T."/>
            <person name="Furuno M."/>
            <person name="Futaki S."/>
            <person name="Gariboldi M."/>
            <person name="Georgii-Hemming P."/>
            <person name="Gingeras T.R."/>
            <person name="Gojobori T."/>
            <person name="Green R.E."/>
            <person name="Gustincich S."/>
            <person name="Harbers M."/>
            <person name="Hayashi Y."/>
            <person name="Hensch T.K."/>
            <person name="Hirokawa N."/>
            <person name="Hill D."/>
            <person name="Huminiecki L."/>
            <person name="Iacono M."/>
            <person name="Ikeo K."/>
            <person name="Iwama A."/>
            <person name="Ishikawa T."/>
            <person name="Jakt M."/>
            <person name="Kanapin A."/>
            <person name="Katoh M."/>
            <person name="Kawasawa Y."/>
            <person name="Kelso J."/>
            <person name="Kitamura H."/>
            <person name="Kitano H."/>
            <person name="Kollias G."/>
            <person name="Krishnan S.P."/>
            <person name="Kruger A."/>
            <person name="Kummerfeld S.K."/>
            <person name="Kurochkin I.V."/>
            <person name="Lareau L.F."/>
            <person name="Lazarevic D."/>
            <person name="Lipovich L."/>
            <person name="Liu J."/>
            <person name="Liuni S."/>
            <person name="McWilliam S."/>
            <person name="Madan Babu M."/>
            <person name="Madera M."/>
            <person name="Marchionni L."/>
            <person name="Matsuda H."/>
            <person name="Matsuzawa S."/>
            <person name="Miki H."/>
            <person name="Mignone F."/>
            <person name="Miyake S."/>
            <person name="Morris K."/>
            <person name="Mottagui-Tabar S."/>
            <person name="Mulder N."/>
            <person name="Nakano N."/>
            <person name="Nakauchi H."/>
            <person name="Ng P."/>
            <person name="Nilsson R."/>
            <person name="Nishiguchi S."/>
            <person name="Nishikawa S."/>
            <person name="Nori F."/>
            <person name="Ohara O."/>
            <person name="Okazaki Y."/>
            <person name="Orlando V."/>
            <person name="Pang K.C."/>
            <person name="Pavan W.J."/>
            <person name="Pavesi G."/>
            <person name="Pesole G."/>
            <person name="Petrovsky N."/>
            <person name="Piazza S."/>
            <person name="Reed J."/>
            <person name="Reid J.F."/>
            <person name="Ring B.Z."/>
            <person name="Ringwald M."/>
            <person name="Rost B."/>
            <person name="Ruan Y."/>
            <person name="Salzberg S.L."/>
            <person name="Sandelin A."/>
            <person name="Schneider C."/>
            <person name="Schoenbach C."/>
            <person name="Sekiguchi K."/>
            <person name="Semple C.A."/>
            <person name="Seno S."/>
            <person name="Sessa L."/>
            <person name="Sheng Y."/>
            <person name="Shibata Y."/>
            <person name="Shimada H."/>
            <person name="Shimada K."/>
            <person name="Silva D."/>
            <person name="Sinclair B."/>
            <person name="Sperling S."/>
            <person name="Stupka E."/>
            <person name="Sugiura K."/>
            <person name="Sultana R."/>
            <person name="Takenaka Y."/>
            <person name="Taki K."/>
            <person name="Tammoja K."/>
            <person name="Tan S.L."/>
            <person name="Tang S."/>
            <person name="Taylor M.S."/>
            <person name="Tegner J."/>
            <person name="Teichmann S.A."/>
            <person name="Ueda H.R."/>
            <person name="van Nimwegen E."/>
            <person name="Verardo R."/>
            <person name="Wei C.L."/>
            <person name="Yagi K."/>
            <person name="Yamanishi H."/>
            <person name="Zabarovsky E."/>
            <person name="Zhu S."/>
            <person name="Zimmer A."/>
            <person name="Hide W."/>
            <person name="Bult C."/>
            <person name="Grimmond S.M."/>
            <person name="Teasdale R.D."/>
            <person name="Liu E.T."/>
            <person name="Brusic V."/>
            <person name="Quackenbush J."/>
            <person name="Wahlestedt C."/>
            <person name="Mattick J.S."/>
            <person name="Hume D.A."/>
            <person name="Kai C."/>
            <person name="Sasaki D."/>
            <person name="Tomaru Y."/>
            <person name="Fukuda S."/>
            <person name="Kanamori-Katayama M."/>
            <person name="Suzuki M."/>
            <person name="Aoki J."/>
            <person name="Arakawa T."/>
            <person name="Iida J."/>
            <person name="Imamura K."/>
            <person name="Itoh M."/>
            <person name="Kato T."/>
            <person name="Kawaji H."/>
            <person name="Kawagashira N."/>
            <person name="Kawashima T."/>
            <person name="Kojima M."/>
            <person name="Kondo S."/>
            <person name="Konno H."/>
            <person name="Nakano K."/>
            <person name="Ninomiya N."/>
            <person name="Nishio T."/>
            <person name="Okada M."/>
            <person name="Plessy C."/>
            <person name="Shibata K."/>
            <person name="Shiraki T."/>
            <person name="Suzuki S."/>
            <person name="Tagami M."/>
            <person name="Waki K."/>
            <person name="Watahiki A."/>
            <person name="Okamura-Oho Y."/>
            <person name="Suzuki H."/>
            <person name="Kawai J."/>
            <person name="Hayashizaki Y."/>
        </authorList>
    </citation>
    <scope>NUCLEOTIDE SEQUENCE [LARGE SCALE MRNA]</scope>
    <source>
        <strain>C57BL/6J</strain>
        <strain>NOD</strain>
        <tissue>Embryo</tissue>
        <tissue>Liver</tissue>
        <tissue>Medulla oblongata</tissue>
    </source>
</reference>
<reference key="2">
    <citation type="journal article" date="2004" name="Genome Res.">
        <title>The status, quality, and expansion of the NIH full-length cDNA project: the Mammalian Gene Collection (MGC).</title>
        <authorList>
            <consortium name="The MGC Project Team"/>
        </authorList>
    </citation>
    <scope>NUCLEOTIDE SEQUENCE [LARGE SCALE MRNA]</scope>
    <source>
        <tissue>Brain</tissue>
    </source>
</reference>
<reference key="3">
    <citation type="journal article" date="2007" name="Proc. Natl. Acad. Sci. U.S.A.">
        <title>Large-scale phosphorylation analysis of mouse liver.</title>
        <authorList>
            <person name="Villen J."/>
            <person name="Beausoleil S.A."/>
            <person name="Gerber S.A."/>
            <person name="Gygi S.P."/>
        </authorList>
    </citation>
    <scope>PHOSPHORYLATION [LARGE SCALE ANALYSIS] AT SER-32; SER-33; SER-40; SER-146 AND SER-257</scope>
    <scope>IDENTIFICATION BY MASS SPECTROMETRY [LARGE SCALE ANALYSIS]</scope>
    <source>
        <tissue>Liver</tissue>
    </source>
</reference>
<reference key="4">
    <citation type="journal article" date="2009" name="Immunity">
        <title>The phagosomal proteome in interferon-gamma-activated macrophages.</title>
        <authorList>
            <person name="Trost M."/>
            <person name="English L."/>
            <person name="Lemieux S."/>
            <person name="Courcelles M."/>
            <person name="Desjardins M."/>
            <person name="Thibault P."/>
        </authorList>
    </citation>
    <scope>IDENTIFICATION BY MASS SPECTROMETRY [LARGE SCALE ANALYSIS]</scope>
</reference>
<reference key="5">
    <citation type="journal article" date="2010" name="Cell">
        <title>A tissue-specific atlas of mouse protein phosphorylation and expression.</title>
        <authorList>
            <person name="Huttlin E.L."/>
            <person name="Jedrychowski M.P."/>
            <person name="Elias J.E."/>
            <person name="Goswami T."/>
            <person name="Rad R."/>
            <person name="Beausoleil S.A."/>
            <person name="Villen J."/>
            <person name="Haas W."/>
            <person name="Sowa M.E."/>
            <person name="Gygi S.P."/>
        </authorList>
    </citation>
    <scope>PHOSPHORYLATION [LARGE SCALE ANALYSIS] AT SER-32; SER-33; SER-40; SER-146 AND SER-257</scope>
    <scope>IDENTIFICATION BY MASS SPECTROMETRY [LARGE SCALE ANALYSIS]</scope>
    <source>
        <tissue>Brain</tissue>
        <tissue>Brown adipose tissue</tissue>
        <tissue>Heart</tissue>
        <tissue>Kidney</tissue>
        <tissue>Liver</tissue>
        <tissue>Lung</tissue>
        <tissue>Pancreas</tissue>
        <tissue>Spleen</tissue>
        <tissue>Testis</tissue>
    </source>
</reference>
<reference key="6">
    <citation type="journal article" date="2013" name="Mol. Cell">
        <title>SIRT5-mediated lysine desuccinylation impacts diverse metabolic pathways.</title>
        <authorList>
            <person name="Park J."/>
            <person name="Chen Y."/>
            <person name="Tishkoff D.X."/>
            <person name="Peng C."/>
            <person name="Tan M."/>
            <person name="Dai L."/>
            <person name="Xie Z."/>
            <person name="Zhang Y."/>
            <person name="Zwaans B.M."/>
            <person name="Skinner M.E."/>
            <person name="Lombard D.B."/>
            <person name="Zhao Y."/>
        </authorList>
    </citation>
    <scope>ACETYLATION [LARGE SCALE ANALYSIS] AT LYS-9 AND LYS-21</scope>
    <scope>IDENTIFICATION BY MASS SPECTROMETRY [LARGE SCALE ANALYSIS]</scope>
    <source>
        <tissue>Embryonic fibroblast</tissue>
    </source>
</reference>
<name>RANB3_MOUSE</name>
<organism>
    <name type="scientific">Mus musculus</name>
    <name type="common">Mouse</name>
    <dbReference type="NCBI Taxonomy" id="10090"/>
    <lineage>
        <taxon>Eukaryota</taxon>
        <taxon>Metazoa</taxon>
        <taxon>Chordata</taxon>
        <taxon>Craniata</taxon>
        <taxon>Vertebrata</taxon>
        <taxon>Euteleostomi</taxon>
        <taxon>Mammalia</taxon>
        <taxon>Eutheria</taxon>
        <taxon>Euarchontoglires</taxon>
        <taxon>Glires</taxon>
        <taxon>Rodentia</taxon>
        <taxon>Myomorpha</taxon>
        <taxon>Muroidea</taxon>
        <taxon>Muridae</taxon>
        <taxon>Murinae</taxon>
        <taxon>Mus</taxon>
        <taxon>Mus</taxon>
    </lineage>
</organism>
<gene>
    <name type="primary">Ranbp3</name>
</gene>
<feature type="initiator methionine" description="Removed" evidence="1">
    <location>
        <position position="1"/>
    </location>
</feature>
<feature type="chain" id="PRO_0000097167" description="Ran-binding protein 3">
    <location>
        <begin position="2"/>
        <end position="491"/>
    </location>
</feature>
<feature type="domain" description="RanBD1" evidence="2">
    <location>
        <begin position="302"/>
        <end position="442"/>
    </location>
</feature>
<feature type="region of interest" description="Disordered" evidence="3">
    <location>
        <begin position="1"/>
        <end position="177"/>
    </location>
</feature>
<feature type="region of interest" description="Disordered" evidence="3">
    <location>
        <begin position="255"/>
        <end position="292"/>
    </location>
</feature>
<feature type="region of interest" description="Disordered" evidence="3">
    <location>
        <begin position="438"/>
        <end position="491"/>
    </location>
</feature>
<feature type="short sequence motif" description="Nuclear localization signal" evidence="1">
    <location>
        <begin position="49"/>
        <end position="57"/>
    </location>
</feature>
<feature type="compositionally biased region" description="Basic and acidic residues" evidence="3">
    <location>
        <begin position="1"/>
        <end position="10"/>
    </location>
</feature>
<feature type="compositionally biased region" description="Basic and acidic residues" evidence="3">
    <location>
        <begin position="51"/>
        <end position="67"/>
    </location>
</feature>
<feature type="compositionally biased region" description="Polar residues" evidence="3">
    <location>
        <begin position="111"/>
        <end position="124"/>
    </location>
</feature>
<feature type="compositionally biased region" description="Polar residues" evidence="3">
    <location>
        <begin position="133"/>
        <end position="149"/>
    </location>
</feature>
<feature type="compositionally biased region" description="Basic and acidic residues" evidence="3">
    <location>
        <begin position="152"/>
        <end position="162"/>
    </location>
</feature>
<feature type="compositionally biased region" description="Low complexity" evidence="3">
    <location>
        <begin position="275"/>
        <end position="286"/>
    </location>
</feature>
<feature type="modified residue" description="N-acetylalanine" evidence="1">
    <location>
        <position position="2"/>
    </location>
</feature>
<feature type="modified residue" description="N6-acetyllysine" evidence="7">
    <location>
        <position position="9"/>
    </location>
</feature>
<feature type="modified residue" description="N6-acetyllysine" evidence="7">
    <location>
        <position position="21"/>
    </location>
</feature>
<feature type="modified residue" description="Phosphoserine" evidence="5 6">
    <location>
        <position position="32"/>
    </location>
</feature>
<feature type="modified residue" description="Phosphoserine" evidence="5 6">
    <location>
        <position position="33"/>
    </location>
</feature>
<feature type="modified residue" description="Phosphoserine" evidence="5 6">
    <location>
        <position position="40"/>
    </location>
</feature>
<feature type="modified residue" description="Phosphothreonine" evidence="1">
    <location>
        <position position="56"/>
    </location>
</feature>
<feature type="modified residue" description="Phosphoserine" evidence="1">
    <location>
        <position position="58"/>
    </location>
</feature>
<feature type="modified residue" description="Phosphoserine" evidence="5 6">
    <location>
        <position position="146"/>
    </location>
</feature>
<feature type="modified residue" description="Phosphoserine" evidence="5 6">
    <location>
        <position position="257"/>
    </location>
</feature>
<feature type="modified residue" description="Phosphoserine" evidence="1">
    <location>
        <position position="277"/>
    </location>
</feature>
<feature type="modified residue" description="Phosphoserine" evidence="1">
    <location>
        <position position="279"/>
    </location>
</feature>
<feature type="modified residue" description="Phosphoserine" evidence="1">
    <location>
        <position position="296"/>
    </location>
</feature>
<feature type="modified residue" description="Phosphoserine" evidence="1">
    <location>
        <position position="463"/>
    </location>
</feature>
<feature type="sequence conflict" description="In Ref. 1; BAE39772." evidence="4" ref="1">
    <original>P</original>
    <variation>T</variation>
    <location>
        <position position="259"/>
    </location>
</feature>
<feature type="sequence conflict" description="In Ref. 1; BAB27684." evidence="4" ref="1">
    <original>L</original>
    <variation>P</variation>
    <location>
        <position position="293"/>
    </location>
</feature>
<feature type="sequence conflict" description="In Ref. 1; BAB27684." evidence="4" ref="1">
    <original>T</original>
    <variation>K</variation>
    <location>
        <position position="317"/>
    </location>
</feature>
<feature type="sequence conflict" description="In Ref. 1; BAB27684." evidence="4" ref="1">
    <original>S</original>
    <variation>P</variation>
    <location>
        <position position="472"/>
    </location>
</feature>
<comment type="function">
    <text evidence="1">Acts as a cofactor for XPO1/CRM1-mediated nuclear export, perhaps as export complex scaffolding protein. Bound to XPO1/CRM1, stabilizes the XPO1/CRM1-cargo interaction. In the absence of Ran-bound GTP prevents binding of XPO1/CRM1 to the nuclear pore complex. Binds to CHC1/RCC1 and increases the guanine nucleotide exchange activity of CHC1/RCC1. Recruits XPO1/CRM1 to CHC1/RCC1 in a Ran-dependent manner. Negative regulator of TGF-beta signaling through interaction with the R-SMAD proteins, SMAD2 and SMAD3, and mediating their nuclear export.</text>
</comment>
<comment type="subunit">
    <text evidence="1">Interacts with CHC1 in a Ran-stimulated manner. Interacts with XPO1. Interacts (via its C-terminal R domain) with SMAD2 (dephosphorylated form via its MH1 and MH2 domains); the interaction results in the nuclear export of SMAD2 and termination of the TGF-beta signaling. Interacts (via its C-terminal R domain) with SMAD3 (dephosphorylated form via its MH1 domain); the interaction results in the nuclear export of SMAD3 and termination of the TGF-beta signaling.</text>
</comment>
<comment type="subcellular location">
    <subcellularLocation>
        <location evidence="1">Cytoplasm</location>
    </subcellularLocation>
    <subcellularLocation>
        <location evidence="1">Nucleus</location>
    </subcellularLocation>
    <text evidence="1">Nuclear import is promoted by phosphorylation at Ser-58 and is dependent on KPNA4.</text>
</comment>
<comment type="PTM">
    <text evidence="1">Phosphorylation at Ser-58 promotes its import into the nucleus.</text>
</comment>
<keyword id="KW-0007">Acetylation</keyword>
<keyword id="KW-0963">Cytoplasm</keyword>
<keyword id="KW-0539">Nucleus</keyword>
<keyword id="KW-0597">Phosphoprotein</keyword>
<keyword id="KW-0653">Protein transport</keyword>
<keyword id="KW-1185">Reference proteome</keyword>
<keyword id="KW-0813">Transport</keyword>
<proteinExistence type="evidence at protein level"/>
<protein>
    <recommendedName>
        <fullName>Ran-binding protein 3</fullName>
        <shortName>RanBP3</shortName>
    </recommendedName>
</protein>
<dbReference type="EMBL" id="AK011541">
    <property type="protein sequence ID" value="BAB27684.1"/>
    <property type="molecule type" value="mRNA"/>
</dbReference>
<dbReference type="EMBL" id="AK133949">
    <property type="protein sequence ID" value="BAE21946.1"/>
    <property type="molecule type" value="mRNA"/>
</dbReference>
<dbReference type="EMBL" id="AK134696">
    <property type="protein sequence ID" value="BAE22245.1"/>
    <property type="molecule type" value="mRNA"/>
</dbReference>
<dbReference type="EMBL" id="AK155301">
    <property type="protein sequence ID" value="BAE33176.1"/>
    <property type="molecule type" value="mRNA"/>
</dbReference>
<dbReference type="EMBL" id="AK167731">
    <property type="protein sequence ID" value="BAE39772.1"/>
    <property type="molecule type" value="mRNA"/>
</dbReference>
<dbReference type="EMBL" id="BC145892">
    <property type="protein sequence ID" value="AAI45893.1"/>
    <property type="molecule type" value="mRNA"/>
</dbReference>
<dbReference type="EMBL" id="BC145894">
    <property type="protein sequence ID" value="AAI45895.1"/>
    <property type="molecule type" value="mRNA"/>
</dbReference>
<dbReference type="CCDS" id="CCDS28911.1"/>
<dbReference type="RefSeq" id="NP_082209.1">
    <property type="nucleotide sequence ID" value="NM_027933.3"/>
</dbReference>
<dbReference type="SMR" id="Q9CT10"/>
<dbReference type="BioGRID" id="214944">
    <property type="interactions" value="22"/>
</dbReference>
<dbReference type="FunCoup" id="Q9CT10">
    <property type="interactions" value="5326"/>
</dbReference>
<dbReference type="IntAct" id="Q9CT10">
    <property type="interactions" value="2"/>
</dbReference>
<dbReference type="MINT" id="Q9CT10"/>
<dbReference type="STRING" id="10090.ENSMUSP00000002445"/>
<dbReference type="GlyGen" id="Q9CT10">
    <property type="glycosylation" value="1 site, 1 O-linked glycan (1 site)"/>
</dbReference>
<dbReference type="iPTMnet" id="Q9CT10"/>
<dbReference type="PhosphoSitePlus" id="Q9CT10"/>
<dbReference type="jPOST" id="Q9CT10"/>
<dbReference type="PaxDb" id="10090-ENSMUSP00000002445"/>
<dbReference type="PeptideAtlas" id="Q9CT10"/>
<dbReference type="ProteomicsDB" id="300351"/>
<dbReference type="Pumba" id="Q9CT10"/>
<dbReference type="Antibodypedia" id="24035">
    <property type="antibodies" value="270 antibodies from 29 providers"/>
</dbReference>
<dbReference type="DNASU" id="71810"/>
<dbReference type="Ensembl" id="ENSMUST00000002445.10">
    <property type="protein sequence ID" value="ENSMUSP00000002445.9"/>
    <property type="gene ID" value="ENSMUSG00000002372.10"/>
</dbReference>
<dbReference type="GeneID" id="71810"/>
<dbReference type="KEGG" id="mmu:71810"/>
<dbReference type="UCSC" id="uc008dct.2">
    <property type="organism name" value="mouse"/>
</dbReference>
<dbReference type="AGR" id="MGI:1919060"/>
<dbReference type="CTD" id="8498"/>
<dbReference type="MGI" id="MGI:1919060">
    <property type="gene designation" value="Ranbp3"/>
</dbReference>
<dbReference type="VEuPathDB" id="HostDB:ENSMUSG00000002372"/>
<dbReference type="eggNOG" id="KOG0866">
    <property type="taxonomic scope" value="Eukaryota"/>
</dbReference>
<dbReference type="GeneTree" id="ENSGT00940000158588"/>
<dbReference type="HOGENOM" id="CLU_034909_1_0_1"/>
<dbReference type="InParanoid" id="Q9CT10"/>
<dbReference type="OrthoDB" id="10250354at2759"/>
<dbReference type="PhylomeDB" id="Q9CT10"/>
<dbReference type="TreeFam" id="TF313181"/>
<dbReference type="BioGRID-ORCS" id="71810">
    <property type="hits" value="14 hits in 79 CRISPR screens"/>
</dbReference>
<dbReference type="ChiTaRS" id="Ranbp3">
    <property type="organism name" value="mouse"/>
</dbReference>
<dbReference type="PRO" id="PR:Q9CT10"/>
<dbReference type="Proteomes" id="UP000000589">
    <property type="component" value="Chromosome 17"/>
</dbReference>
<dbReference type="RNAct" id="Q9CT10">
    <property type="molecule type" value="protein"/>
</dbReference>
<dbReference type="Bgee" id="ENSMUSG00000002372">
    <property type="expression patterns" value="Expressed in spermatocyte and 271 other cell types or tissues"/>
</dbReference>
<dbReference type="ExpressionAtlas" id="Q9CT10">
    <property type="expression patterns" value="baseline and differential"/>
</dbReference>
<dbReference type="GO" id="GO:0005737">
    <property type="term" value="C:cytoplasm"/>
    <property type="evidence" value="ECO:0007669"/>
    <property type="project" value="UniProtKB-SubCell"/>
</dbReference>
<dbReference type="GO" id="GO:0005634">
    <property type="term" value="C:nucleus"/>
    <property type="evidence" value="ECO:0007669"/>
    <property type="project" value="UniProtKB-SubCell"/>
</dbReference>
<dbReference type="GO" id="GO:0046907">
    <property type="term" value="P:intracellular transport"/>
    <property type="evidence" value="ECO:0007669"/>
    <property type="project" value="InterPro"/>
</dbReference>
<dbReference type="GO" id="GO:0015031">
    <property type="term" value="P:protein transport"/>
    <property type="evidence" value="ECO:0007669"/>
    <property type="project" value="UniProtKB-KW"/>
</dbReference>
<dbReference type="CDD" id="cd13180">
    <property type="entry name" value="RanBD_RanBP3"/>
    <property type="match status" value="1"/>
</dbReference>
<dbReference type="FunFam" id="2.30.29.30:FF:000106">
    <property type="entry name" value="ran-binding protein 3 isoform X2"/>
    <property type="match status" value="1"/>
</dbReference>
<dbReference type="Gene3D" id="2.30.29.30">
    <property type="entry name" value="Pleckstrin-homology domain (PH domain)/Phosphotyrosine-binding domain (PTB)"/>
    <property type="match status" value="1"/>
</dbReference>
<dbReference type="InterPro" id="IPR011993">
    <property type="entry name" value="PH-like_dom_sf"/>
</dbReference>
<dbReference type="InterPro" id="IPR000156">
    <property type="entry name" value="Ran_bind_dom"/>
</dbReference>
<dbReference type="InterPro" id="IPR045255">
    <property type="entry name" value="RanBP1-like"/>
</dbReference>
<dbReference type="PANTHER" id="PTHR23138">
    <property type="entry name" value="RAN BINDING PROTEIN"/>
    <property type="match status" value="1"/>
</dbReference>
<dbReference type="PANTHER" id="PTHR23138:SF91">
    <property type="entry name" value="RAN-BINDING PROTEIN 3"/>
    <property type="match status" value="1"/>
</dbReference>
<dbReference type="Pfam" id="PF00638">
    <property type="entry name" value="Ran_BP1"/>
    <property type="match status" value="1"/>
</dbReference>
<dbReference type="SMART" id="SM00160">
    <property type="entry name" value="RanBD"/>
    <property type="match status" value="1"/>
</dbReference>
<dbReference type="SUPFAM" id="SSF50729">
    <property type="entry name" value="PH domain-like"/>
    <property type="match status" value="1"/>
</dbReference>
<dbReference type="PROSITE" id="PS50196">
    <property type="entry name" value="RANBD1"/>
    <property type="match status" value="1"/>
</dbReference>
<sequence>MADLANEEKPAVAPSVFVFQKDKGQKRSAGSSSPEAGEDSDHEDGNYCPPVKRERTSSLTHSEEKSSGFRLKPPTLIHGQAPSAGLPSQKPREQQRGVLRPAVLQAPQPKVLSQTVPSSGTNGVSMPADCTGPATSVSPENLTQRSPSESAEETHTLEEKVPQKTPHGTSEEGHCEEEQAAPQAFVFGQNLRDRVKLMNENASVADVDSAAHPSSETPSATNYFLQYISSSADNATHSADNSTKFVFGQNMSERVLSPPKLNEANSDTSRETTHAQSGSESSSQEAAPKKESLAESAAAYTKATAWTCLLEKVEVITGEEAESNVLQIQCKLFVFDKTSQSWVERGRGLLRLNDMASTDDGTLQSRLVMRTQGSLRLILNTKLWAQMQMDKASEKSIRITATDAEDQGVKVFLISASSKDTGQLYAALHHRILALRSRAEQEQEAKAPPPEPGATRATEEEDSDEDAVLAPSGVTGAGTGDEGDGQAPGST</sequence>
<accession>Q9CT10</accession>
<accession>A6H6I9</accession>
<accession>Q3TIS4</accession>
<accession>Q3U2G4</accession>
<accession>Q3UYG7</accession>
<evidence type="ECO:0000250" key="1">
    <source>
        <dbReference type="UniProtKB" id="Q9H6Z4"/>
    </source>
</evidence>
<evidence type="ECO:0000255" key="2">
    <source>
        <dbReference type="PROSITE-ProRule" id="PRU00164"/>
    </source>
</evidence>
<evidence type="ECO:0000256" key="3">
    <source>
        <dbReference type="SAM" id="MobiDB-lite"/>
    </source>
</evidence>
<evidence type="ECO:0000305" key="4"/>
<evidence type="ECO:0007744" key="5">
    <source>
    </source>
</evidence>
<evidence type="ECO:0007744" key="6">
    <source>
    </source>
</evidence>
<evidence type="ECO:0007744" key="7">
    <source>
    </source>
</evidence>